<name>RECA_HAMD5</name>
<comment type="function">
    <text evidence="1">Can catalyze the hydrolysis of ATP in the presence of single-stranded DNA, the ATP-dependent uptake of single-stranded DNA by duplex DNA, and the ATP-dependent hybridization of homologous single-stranded DNAs. It interacts with LexA causing its activation and leading to its autocatalytic cleavage.</text>
</comment>
<comment type="subcellular location">
    <subcellularLocation>
        <location evidence="1">Cytoplasm</location>
    </subcellularLocation>
</comment>
<comment type="similarity">
    <text evidence="1">Belongs to the RecA family.</text>
</comment>
<accession>C4K841</accession>
<dbReference type="EMBL" id="CP001277">
    <property type="protein sequence ID" value="ACQ66801.1"/>
    <property type="molecule type" value="Genomic_DNA"/>
</dbReference>
<dbReference type="RefSeq" id="WP_012737766.1">
    <property type="nucleotide sequence ID" value="NC_012751.1"/>
</dbReference>
<dbReference type="SMR" id="C4K841"/>
<dbReference type="STRING" id="572265.HDEF_0025"/>
<dbReference type="GeneID" id="66259969"/>
<dbReference type="KEGG" id="hde:HDEF_0025"/>
<dbReference type="eggNOG" id="COG0468">
    <property type="taxonomic scope" value="Bacteria"/>
</dbReference>
<dbReference type="HOGENOM" id="CLU_040469_3_2_6"/>
<dbReference type="Proteomes" id="UP000002334">
    <property type="component" value="Chromosome"/>
</dbReference>
<dbReference type="GO" id="GO:0005829">
    <property type="term" value="C:cytosol"/>
    <property type="evidence" value="ECO:0007669"/>
    <property type="project" value="TreeGrafter"/>
</dbReference>
<dbReference type="GO" id="GO:0005524">
    <property type="term" value="F:ATP binding"/>
    <property type="evidence" value="ECO:0007669"/>
    <property type="project" value="UniProtKB-UniRule"/>
</dbReference>
<dbReference type="GO" id="GO:0016887">
    <property type="term" value="F:ATP hydrolysis activity"/>
    <property type="evidence" value="ECO:0007669"/>
    <property type="project" value="InterPro"/>
</dbReference>
<dbReference type="GO" id="GO:0140664">
    <property type="term" value="F:ATP-dependent DNA damage sensor activity"/>
    <property type="evidence" value="ECO:0007669"/>
    <property type="project" value="InterPro"/>
</dbReference>
<dbReference type="GO" id="GO:0003684">
    <property type="term" value="F:damaged DNA binding"/>
    <property type="evidence" value="ECO:0007669"/>
    <property type="project" value="UniProtKB-UniRule"/>
</dbReference>
<dbReference type="GO" id="GO:0003697">
    <property type="term" value="F:single-stranded DNA binding"/>
    <property type="evidence" value="ECO:0007669"/>
    <property type="project" value="UniProtKB-UniRule"/>
</dbReference>
<dbReference type="GO" id="GO:0006310">
    <property type="term" value="P:DNA recombination"/>
    <property type="evidence" value="ECO:0007669"/>
    <property type="project" value="UniProtKB-UniRule"/>
</dbReference>
<dbReference type="GO" id="GO:0006281">
    <property type="term" value="P:DNA repair"/>
    <property type="evidence" value="ECO:0007669"/>
    <property type="project" value="UniProtKB-UniRule"/>
</dbReference>
<dbReference type="GO" id="GO:0009432">
    <property type="term" value="P:SOS response"/>
    <property type="evidence" value="ECO:0007669"/>
    <property type="project" value="UniProtKB-UniRule"/>
</dbReference>
<dbReference type="CDD" id="cd00983">
    <property type="entry name" value="RecA"/>
    <property type="match status" value="1"/>
</dbReference>
<dbReference type="FunFam" id="3.40.50.300:FF:000087">
    <property type="entry name" value="Recombinase RecA"/>
    <property type="match status" value="1"/>
</dbReference>
<dbReference type="Gene3D" id="3.40.50.300">
    <property type="entry name" value="P-loop containing nucleotide triphosphate hydrolases"/>
    <property type="match status" value="1"/>
</dbReference>
<dbReference type="HAMAP" id="MF_00268">
    <property type="entry name" value="RecA"/>
    <property type="match status" value="1"/>
</dbReference>
<dbReference type="InterPro" id="IPR003593">
    <property type="entry name" value="AAA+_ATPase"/>
</dbReference>
<dbReference type="InterPro" id="IPR013765">
    <property type="entry name" value="DNA_recomb/repair_RecA"/>
</dbReference>
<dbReference type="InterPro" id="IPR020584">
    <property type="entry name" value="DNA_recomb/repair_RecA_CS"/>
</dbReference>
<dbReference type="InterPro" id="IPR027417">
    <property type="entry name" value="P-loop_NTPase"/>
</dbReference>
<dbReference type="InterPro" id="IPR049261">
    <property type="entry name" value="RecA-like_C"/>
</dbReference>
<dbReference type="InterPro" id="IPR049428">
    <property type="entry name" value="RecA-like_N"/>
</dbReference>
<dbReference type="InterPro" id="IPR020588">
    <property type="entry name" value="RecA_ATP-bd"/>
</dbReference>
<dbReference type="InterPro" id="IPR023400">
    <property type="entry name" value="RecA_C_sf"/>
</dbReference>
<dbReference type="InterPro" id="IPR020587">
    <property type="entry name" value="RecA_monomer-monomer_interface"/>
</dbReference>
<dbReference type="NCBIfam" id="TIGR02012">
    <property type="entry name" value="tigrfam_recA"/>
    <property type="match status" value="1"/>
</dbReference>
<dbReference type="PANTHER" id="PTHR45900:SF1">
    <property type="entry name" value="MITOCHONDRIAL DNA REPAIR PROTEIN RECA HOMOLOG-RELATED"/>
    <property type="match status" value="1"/>
</dbReference>
<dbReference type="PANTHER" id="PTHR45900">
    <property type="entry name" value="RECA"/>
    <property type="match status" value="1"/>
</dbReference>
<dbReference type="Pfam" id="PF00154">
    <property type="entry name" value="RecA"/>
    <property type="match status" value="1"/>
</dbReference>
<dbReference type="Pfam" id="PF21096">
    <property type="entry name" value="RecA_C"/>
    <property type="match status" value="1"/>
</dbReference>
<dbReference type="PRINTS" id="PR00142">
    <property type="entry name" value="RECA"/>
</dbReference>
<dbReference type="SMART" id="SM00382">
    <property type="entry name" value="AAA"/>
    <property type="match status" value="1"/>
</dbReference>
<dbReference type="SUPFAM" id="SSF52540">
    <property type="entry name" value="P-loop containing nucleoside triphosphate hydrolases"/>
    <property type="match status" value="1"/>
</dbReference>
<dbReference type="SUPFAM" id="SSF54752">
    <property type="entry name" value="RecA protein, C-terminal domain"/>
    <property type="match status" value="1"/>
</dbReference>
<dbReference type="PROSITE" id="PS00321">
    <property type="entry name" value="RECA_1"/>
    <property type="match status" value="1"/>
</dbReference>
<dbReference type="PROSITE" id="PS50162">
    <property type="entry name" value="RECA_2"/>
    <property type="match status" value="1"/>
</dbReference>
<dbReference type="PROSITE" id="PS50163">
    <property type="entry name" value="RECA_3"/>
    <property type="match status" value="1"/>
</dbReference>
<sequence>MIRDENKQKALAAALAQIEKQFGKGSIMRLGEDRSMDVETISTGSLSLDIALGAGGLPMGRIVEIYGPESSGKTTLTLQVIAAAQREGKVCAFIDAEHALDPVYAKKLGVDIDNLLCSQPDTGEQALEICDSLTRSGAVDVIIVDSVAALVPKAEIEGEIGDSHMGLAARMMSQAMRKLAGNLKNANTLLIFINQIRMKIGVMFGNPETTTGGNALKFYASVRLDIRRVGAIKEGEMVIGNDTRVKVVKNKIAAPFKQADFQILYGEGINTHGELIDLGVKHQLVEKAGSWYSYNGTKIGQGKSNVTEYLKTNPSIAAELDKILRNRLLNPVCEKDKTDLDPLDKIYHENSTAF</sequence>
<keyword id="KW-0067">ATP-binding</keyword>
<keyword id="KW-0963">Cytoplasm</keyword>
<keyword id="KW-0227">DNA damage</keyword>
<keyword id="KW-0233">DNA recombination</keyword>
<keyword id="KW-0234">DNA repair</keyword>
<keyword id="KW-0238">DNA-binding</keyword>
<keyword id="KW-0547">Nucleotide-binding</keyword>
<keyword id="KW-0742">SOS response</keyword>
<organism>
    <name type="scientific">Hamiltonella defensa subsp. Acyrthosiphon pisum (strain 5AT)</name>
    <dbReference type="NCBI Taxonomy" id="572265"/>
    <lineage>
        <taxon>Bacteria</taxon>
        <taxon>Pseudomonadati</taxon>
        <taxon>Pseudomonadota</taxon>
        <taxon>Gammaproteobacteria</taxon>
        <taxon>Enterobacterales</taxon>
        <taxon>Enterobacteriaceae</taxon>
        <taxon>aphid secondary symbionts</taxon>
        <taxon>Candidatus Hamiltonella</taxon>
    </lineage>
</organism>
<gene>
    <name evidence="1" type="primary">recA</name>
    <name type="ordered locus">HDEF_0025</name>
</gene>
<feature type="chain" id="PRO_1000204709" description="Protein RecA">
    <location>
        <begin position="1"/>
        <end position="354"/>
    </location>
</feature>
<feature type="binding site" evidence="1">
    <location>
        <begin position="67"/>
        <end position="74"/>
    </location>
    <ligand>
        <name>ATP</name>
        <dbReference type="ChEBI" id="CHEBI:30616"/>
    </ligand>
</feature>
<evidence type="ECO:0000255" key="1">
    <source>
        <dbReference type="HAMAP-Rule" id="MF_00268"/>
    </source>
</evidence>
<protein>
    <recommendedName>
        <fullName evidence="1">Protein RecA</fullName>
    </recommendedName>
    <alternativeName>
        <fullName evidence="1">Recombinase A</fullName>
    </alternativeName>
</protein>
<proteinExistence type="inferred from homology"/>
<reference key="1">
    <citation type="journal article" date="2009" name="Proc. Natl. Acad. Sci. U.S.A.">
        <title>Hamiltonella defensa, genome evolution of protective bacterial endosymbiont from pathogenic ancestors.</title>
        <authorList>
            <person name="Degnan P.H."/>
            <person name="Yu Y."/>
            <person name="Sisneros N."/>
            <person name="Wing R.A."/>
            <person name="Moran N.A."/>
        </authorList>
    </citation>
    <scope>NUCLEOTIDE SEQUENCE [LARGE SCALE GENOMIC DNA]</scope>
    <source>
        <strain>5AT</strain>
    </source>
</reference>